<comment type="function">
    <text evidence="1">Transaldolase is important for the balance of metabolites in the pentose-phosphate pathway.</text>
</comment>
<comment type="catalytic activity">
    <reaction evidence="1">
        <text>D-sedoheptulose 7-phosphate + D-glyceraldehyde 3-phosphate = D-erythrose 4-phosphate + beta-D-fructose 6-phosphate</text>
        <dbReference type="Rhea" id="RHEA:17053"/>
        <dbReference type="ChEBI" id="CHEBI:16897"/>
        <dbReference type="ChEBI" id="CHEBI:57483"/>
        <dbReference type="ChEBI" id="CHEBI:57634"/>
        <dbReference type="ChEBI" id="CHEBI:59776"/>
        <dbReference type="EC" id="2.2.1.2"/>
    </reaction>
</comment>
<comment type="pathway">
    <text evidence="1">Carbohydrate degradation; pentose phosphate pathway; D-glyceraldehyde 3-phosphate and beta-D-fructose 6-phosphate from D-ribose 5-phosphate and D-xylulose 5-phosphate (non-oxidative stage): step 2/3.</text>
</comment>
<comment type="subcellular location">
    <subcellularLocation>
        <location evidence="1">Cytoplasm</location>
    </subcellularLocation>
</comment>
<comment type="similarity">
    <text evidence="1">Belongs to the transaldolase family. Type 3B subfamily.</text>
</comment>
<sequence length="217" mass="23206">MKFFVDTADVKDIRELNDLGLLDGVTTNPSLILKAGRDIVEVTKEICSIVEGPVSAEVTATEYSAMMKEAAALSKIADNICIKLPLTLDGLKACKALTSDGHQTNVTLCFSANQALLAAKAGATFVSPFIGRLDDIAVDGMDLIREIRQIFDNYGYETEILAASVRTVNHVKEAALIGADVVTAPPATLKALVKHPLTDKGLEMFLADWAKTGQKIA</sequence>
<protein>
    <recommendedName>
        <fullName evidence="1">Probable transaldolase</fullName>
        <ecNumber evidence="1">2.2.1.2</ecNumber>
    </recommendedName>
</protein>
<evidence type="ECO:0000255" key="1">
    <source>
        <dbReference type="HAMAP-Rule" id="MF_00494"/>
    </source>
</evidence>
<organism>
    <name type="scientific">Rhizobium meliloti (strain 1021)</name>
    <name type="common">Ensifer meliloti</name>
    <name type="synonym">Sinorhizobium meliloti</name>
    <dbReference type="NCBI Taxonomy" id="266834"/>
    <lineage>
        <taxon>Bacteria</taxon>
        <taxon>Pseudomonadati</taxon>
        <taxon>Pseudomonadota</taxon>
        <taxon>Alphaproteobacteria</taxon>
        <taxon>Hyphomicrobiales</taxon>
        <taxon>Rhizobiaceae</taxon>
        <taxon>Sinorhizobium/Ensifer group</taxon>
        <taxon>Sinorhizobium</taxon>
    </lineage>
</organism>
<feature type="chain" id="PRO_0000173680" description="Probable transaldolase">
    <location>
        <begin position="1"/>
        <end position="217"/>
    </location>
</feature>
<feature type="active site" description="Schiff-base intermediate with substrate" evidence="1">
    <location>
        <position position="83"/>
    </location>
</feature>
<name>TAL_RHIME</name>
<reference key="1">
    <citation type="journal article" date="2001" name="Proc. Natl. Acad. Sci. U.S.A.">
        <title>Analysis of the chromosome sequence of the legume symbiont Sinorhizobium meliloti strain 1021.</title>
        <authorList>
            <person name="Capela D."/>
            <person name="Barloy-Hubler F."/>
            <person name="Gouzy J."/>
            <person name="Bothe G."/>
            <person name="Ampe F."/>
            <person name="Batut J."/>
            <person name="Boistard P."/>
            <person name="Becker A."/>
            <person name="Boutry M."/>
            <person name="Cadieu E."/>
            <person name="Dreano S."/>
            <person name="Gloux S."/>
            <person name="Godrie T."/>
            <person name="Goffeau A."/>
            <person name="Kahn D."/>
            <person name="Kiss E."/>
            <person name="Lelaure V."/>
            <person name="Masuy D."/>
            <person name="Pohl T."/>
            <person name="Portetelle D."/>
            <person name="Puehler A."/>
            <person name="Purnelle B."/>
            <person name="Ramsperger U."/>
            <person name="Renard C."/>
            <person name="Thebault P."/>
            <person name="Vandenbol M."/>
            <person name="Weidner S."/>
            <person name="Galibert F."/>
        </authorList>
    </citation>
    <scope>NUCLEOTIDE SEQUENCE [LARGE SCALE GENOMIC DNA]</scope>
    <source>
        <strain>1021</strain>
    </source>
</reference>
<reference key="2">
    <citation type="journal article" date="2001" name="Science">
        <title>The composite genome of the legume symbiont Sinorhizobium meliloti.</title>
        <authorList>
            <person name="Galibert F."/>
            <person name="Finan T.M."/>
            <person name="Long S.R."/>
            <person name="Puehler A."/>
            <person name="Abola P."/>
            <person name="Ampe F."/>
            <person name="Barloy-Hubler F."/>
            <person name="Barnett M.J."/>
            <person name="Becker A."/>
            <person name="Boistard P."/>
            <person name="Bothe G."/>
            <person name="Boutry M."/>
            <person name="Bowser L."/>
            <person name="Buhrmester J."/>
            <person name="Cadieu E."/>
            <person name="Capela D."/>
            <person name="Chain P."/>
            <person name="Cowie A."/>
            <person name="Davis R.W."/>
            <person name="Dreano S."/>
            <person name="Federspiel N.A."/>
            <person name="Fisher R.F."/>
            <person name="Gloux S."/>
            <person name="Godrie T."/>
            <person name="Goffeau A."/>
            <person name="Golding B."/>
            <person name="Gouzy J."/>
            <person name="Gurjal M."/>
            <person name="Hernandez-Lucas I."/>
            <person name="Hong A."/>
            <person name="Huizar L."/>
            <person name="Hyman R.W."/>
            <person name="Jones T."/>
            <person name="Kahn D."/>
            <person name="Kahn M.L."/>
            <person name="Kalman S."/>
            <person name="Keating D.H."/>
            <person name="Kiss E."/>
            <person name="Komp C."/>
            <person name="Lelaure V."/>
            <person name="Masuy D."/>
            <person name="Palm C."/>
            <person name="Peck M.C."/>
            <person name="Pohl T.M."/>
            <person name="Portetelle D."/>
            <person name="Purnelle B."/>
            <person name="Ramsperger U."/>
            <person name="Surzycki R."/>
            <person name="Thebault P."/>
            <person name="Vandenbol M."/>
            <person name="Vorhoelter F.J."/>
            <person name="Weidner S."/>
            <person name="Wells D.H."/>
            <person name="Wong K."/>
            <person name="Yeh K.-C."/>
            <person name="Batut J."/>
        </authorList>
    </citation>
    <scope>NUCLEOTIDE SEQUENCE [LARGE SCALE GENOMIC DNA]</scope>
    <source>
        <strain>1021</strain>
    </source>
</reference>
<keyword id="KW-0963">Cytoplasm</keyword>
<keyword id="KW-0570">Pentose shunt</keyword>
<keyword id="KW-1185">Reference proteome</keyword>
<keyword id="KW-0704">Schiff base</keyword>
<keyword id="KW-0808">Transferase</keyword>
<gene>
    <name evidence="1" type="primary">tal</name>
    <name type="ordered locus">R03040</name>
    <name type="ORF">SMc02495</name>
</gene>
<dbReference type="EC" id="2.2.1.2" evidence="1"/>
<dbReference type="EMBL" id="AL591688">
    <property type="protein sequence ID" value="CAC47619.1"/>
    <property type="molecule type" value="Genomic_DNA"/>
</dbReference>
<dbReference type="RefSeq" id="NP_387146.1">
    <property type="nucleotide sequence ID" value="NC_003047.1"/>
</dbReference>
<dbReference type="SMR" id="Q92LK3"/>
<dbReference type="EnsemblBacteria" id="CAC47619">
    <property type="protein sequence ID" value="CAC47619"/>
    <property type="gene ID" value="SMc02495"/>
</dbReference>
<dbReference type="KEGG" id="sme:SMc02495"/>
<dbReference type="PATRIC" id="fig|266834.11.peg.4573"/>
<dbReference type="eggNOG" id="COG0176">
    <property type="taxonomic scope" value="Bacteria"/>
</dbReference>
<dbReference type="HOGENOM" id="CLU_079764_0_0_5"/>
<dbReference type="OrthoDB" id="9807051at2"/>
<dbReference type="UniPathway" id="UPA00115">
    <property type="reaction ID" value="UER00414"/>
</dbReference>
<dbReference type="Proteomes" id="UP000001976">
    <property type="component" value="Chromosome"/>
</dbReference>
<dbReference type="GO" id="GO:0005737">
    <property type="term" value="C:cytoplasm"/>
    <property type="evidence" value="ECO:0007669"/>
    <property type="project" value="UniProtKB-SubCell"/>
</dbReference>
<dbReference type="GO" id="GO:0016832">
    <property type="term" value="F:aldehyde-lyase activity"/>
    <property type="evidence" value="ECO:0007669"/>
    <property type="project" value="InterPro"/>
</dbReference>
<dbReference type="GO" id="GO:0004801">
    <property type="term" value="F:transaldolase activity"/>
    <property type="evidence" value="ECO:0007669"/>
    <property type="project" value="UniProtKB-UniRule"/>
</dbReference>
<dbReference type="GO" id="GO:0005975">
    <property type="term" value="P:carbohydrate metabolic process"/>
    <property type="evidence" value="ECO:0007669"/>
    <property type="project" value="InterPro"/>
</dbReference>
<dbReference type="GO" id="GO:0006098">
    <property type="term" value="P:pentose-phosphate shunt"/>
    <property type="evidence" value="ECO:0007669"/>
    <property type="project" value="UniProtKB-UniRule"/>
</dbReference>
<dbReference type="CDD" id="cd00956">
    <property type="entry name" value="Transaldolase_FSA"/>
    <property type="match status" value="1"/>
</dbReference>
<dbReference type="FunFam" id="3.20.20.70:FF:000018">
    <property type="entry name" value="Probable transaldolase"/>
    <property type="match status" value="1"/>
</dbReference>
<dbReference type="Gene3D" id="3.20.20.70">
    <property type="entry name" value="Aldolase class I"/>
    <property type="match status" value="1"/>
</dbReference>
<dbReference type="HAMAP" id="MF_00494">
    <property type="entry name" value="Transaldolase_3b"/>
    <property type="match status" value="1"/>
</dbReference>
<dbReference type="InterPro" id="IPR013785">
    <property type="entry name" value="Aldolase_TIM"/>
</dbReference>
<dbReference type="InterPro" id="IPR001585">
    <property type="entry name" value="TAL/FSA"/>
</dbReference>
<dbReference type="InterPro" id="IPR022999">
    <property type="entry name" value="Transaldolase_3B"/>
</dbReference>
<dbReference type="InterPro" id="IPR004731">
    <property type="entry name" value="Transaldolase_3B/F6P_aldolase"/>
</dbReference>
<dbReference type="InterPro" id="IPR018225">
    <property type="entry name" value="Transaldolase_AS"/>
</dbReference>
<dbReference type="InterPro" id="IPR033919">
    <property type="entry name" value="TSA/FSA_arc/bac"/>
</dbReference>
<dbReference type="NCBIfam" id="TIGR00875">
    <property type="entry name" value="fsa_talC_mipB"/>
    <property type="match status" value="1"/>
</dbReference>
<dbReference type="PANTHER" id="PTHR10683:SF40">
    <property type="entry name" value="FRUCTOSE-6-PHOSPHATE ALDOLASE 1-RELATED"/>
    <property type="match status" value="1"/>
</dbReference>
<dbReference type="PANTHER" id="PTHR10683">
    <property type="entry name" value="TRANSALDOLASE"/>
    <property type="match status" value="1"/>
</dbReference>
<dbReference type="Pfam" id="PF00923">
    <property type="entry name" value="TAL_FSA"/>
    <property type="match status" value="1"/>
</dbReference>
<dbReference type="SUPFAM" id="SSF51569">
    <property type="entry name" value="Aldolase"/>
    <property type="match status" value="1"/>
</dbReference>
<dbReference type="PROSITE" id="PS01054">
    <property type="entry name" value="TRANSALDOLASE_1"/>
    <property type="match status" value="1"/>
</dbReference>
<dbReference type="PROSITE" id="PS00958">
    <property type="entry name" value="TRANSALDOLASE_2"/>
    <property type="match status" value="1"/>
</dbReference>
<accession>Q92LK3</accession>
<proteinExistence type="inferred from homology"/>